<keyword id="KW-0067">ATP-binding</keyword>
<keyword id="KW-0963">Cytoplasm</keyword>
<keyword id="KW-0436">Ligase</keyword>
<keyword id="KW-0547">Nucleotide-binding</keyword>
<keyword id="KW-0819">tRNA processing</keyword>
<protein>
    <recommendedName>
        <fullName evidence="1">tRNA(Ile)-lysidine synthase</fullName>
        <ecNumber evidence="1">6.3.4.19</ecNumber>
    </recommendedName>
    <alternativeName>
        <fullName evidence="1">tRNA(Ile)-2-lysyl-cytidine synthase</fullName>
    </alternativeName>
    <alternativeName>
        <fullName evidence="1">tRNA(Ile)-lysidine synthetase</fullName>
    </alternativeName>
</protein>
<reference key="1">
    <citation type="journal article" date="2008" name="PLoS ONE">
        <title>Genome sequence of Brucella abortus vaccine strain S19 compared to virulent strains yields candidate virulence genes.</title>
        <authorList>
            <person name="Crasta O.R."/>
            <person name="Folkerts O."/>
            <person name="Fei Z."/>
            <person name="Mane S.P."/>
            <person name="Evans C."/>
            <person name="Martino-Catt S."/>
            <person name="Bricker B."/>
            <person name="Yu G."/>
            <person name="Du L."/>
            <person name="Sobral B.W."/>
        </authorList>
    </citation>
    <scope>NUCLEOTIDE SEQUENCE [LARGE SCALE GENOMIC DNA]</scope>
    <source>
        <strain>S19</strain>
    </source>
</reference>
<organism>
    <name type="scientific">Brucella abortus (strain S19)</name>
    <dbReference type="NCBI Taxonomy" id="430066"/>
    <lineage>
        <taxon>Bacteria</taxon>
        <taxon>Pseudomonadati</taxon>
        <taxon>Pseudomonadota</taxon>
        <taxon>Alphaproteobacteria</taxon>
        <taxon>Hyphomicrobiales</taxon>
        <taxon>Brucellaceae</taxon>
        <taxon>Brucella/Ochrobactrum group</taxon>
        <taxon>Brucella</taxon>
    </lineage>
</organism>
<sequence length="448" mass="48606">MGLSPVNIFKPFGLGRAKAVIAAVSGGSDSLGLLFLLKDYLSTLESPPVLIAVTVDHKLRAESALEAENVGLLCQKHGIMHCVLSWDDPKPAHGLAAAARTARYRLLVQAARDAGAGFIVTGHTENDQIETFLMRKARSGHCEARGLAAMSPRSLLEGSVELARPLLTVSRQALRDELTRRGIAWVDDPSNANIDYERPRVRLGVAAEADGQEVLEQIAQAGAARERDNAALVEALADPATLGVDAAGMMFLNADCYAALSPGARQLFSGLLASIAGGRRFLPGDGERRRIERMLSGQDAPRRLTVFGALIERGEKGAPHRFRRERRNLPKLDLVPGQHIVWDGRFCFFNSGGRSFEIAPPGRQELIDFLKNSGRDIESRRCEALLISPALYEGGKLAFVPFLPGAEWPQGVHIERHFAIFDHVLPGHDFALAQAVEARLGRACAEIS</sequence>
<accession>B2S7D1</accession>
<gene>
    <name evidence="1" type="primary">tilS</name>
    <name type="ordered locus">BAbS19_I15940</name>
</gene>
<feature type="chain" id="PRO_1000137866" description="tRNA(Ile)-lysidine synthase">
    <location>
        <begin position="1"/>
        <end position="448"/>
    </location>
</feature>
<feature type="binding site" evidence="1">
    <location>
        <begin position="25"/>
        <end position="30"/>
    </location>
    <ligand>
        <name>ATP</name>
        <dbReference type="ChEBI" id="CHEBI:30616"/>
    </ligand>
</feature>
<comment type="function">
    <text evidence="1">Ligates lysine onto the cytidine present at position 34 of the AUA codon-specific tRNA(Ile) that contains the anticodon CAU, in an ATP-dependent manner. Cytidine is converted to lysidine, thus changing the amino acid specificity of the tRNA from methionine to isoleucine.</text>
</comment>
<comment type="catalytic activity">
    <reaction evidence="1">
        <text>cytidine(34) in tRNA(Ile2) + L-lysine + ATP = lysidine(34) in tRNA(Ile2) + AMP + diphosphate + H(+)</text>
        <dbReference type="Rhea" id="RHEA:43744"/>
        <dbReference type="Rhea" id="RHEA-COMP:10625"/>
        <dbReference type="Rhea" id="RHEA-COMP:10670"/>
        <dbReference type="ChEBI" id="CHEBI:15378"/>
        <dbReference type="ChEBI" id="CHEBI:30616"/>
        <dbReference type="ChEBI" id="CHEBI:32551"/>
        <dbReference type="ChEBI" id="CHEBI:33019"/>
        <dbReference type="ChEBI" id="CHEBI:82748"/>
        <dbReference type="ChEBI" id="CHEBI:83665"/>
        <dbReference type="ChEBI" id="CHEBI:456215"/>
        <dbReference type="EC" id="6.3.4.19"/>
    </reaction>
</comment>
<comment type="subcellular location">
    <subcellularLocation>
        <location evidence="1">Cytoplasm</location>
    </subcellularLocation>
</comment>
<comment type="domain">
    <text>The N-terminal region contains the highly conserved SGGXDS motif, predicted to be a P-loop motif involved in ATP binding.</text>
</comment>
<comment type="similarity">
    <text evidence="1">Belongs to the tRNA(Ile)-lysidine synthase family.</text>
</comment>
<dbReference type="EC" id="6.3.4.19" evidence="1"/>
<dbReference type="EMBL" id="CP000887">
    <property type="protein sequence ID" value="ACD73078.1"/>
    <property type="molecule type" value="Genomic_DNA"/>
</dbReference>
<dbReference type="RefSeq" id="WP_002967893.1">
    <property type="nucleotide sequence ID" value="NC_010742.1"/>
</dbReference>
<dbReference type="SMR" id="B2S7D1"/>
<dbReference type="GeneID" id="93017943"/>
<dbReference type="KEGG" id="bmc:BAbS19_I15940"/>
<dbReference type="HOGENOM" id="CLU_018869_3_3_5"/>
<dbReference type="Proteomes" id="UP000002565">
    <property type="component" value="Chromosome 1"/>
</dbReference>
<dbReference type="GO" id="GO:0005737">
    <property type="term" value="C:cytoplasm"/>
    <property type="evidence" value="ECO:0007669"/>
    <property type="project" value="UniProtKB-SubCell"/>
</dbReference>
<dbReference type="GO" id="GO:0005524">
    <property type="term" value="F:ATP binding"/>
    <property type="evidence" value="ECO:0007669"/>
    <property type="project" value="UniProtKB-UniRule"/>
</dbReference>
<dbReference type="GO" id="GO:0032267">
    <property type="term" value="F:tRNA(Ile)-lysidine synthase activity"/>
    <property type="evidence" value="ECO:0007669"/>
    <property type="project" value="UniProtKB-EC"/>
</dbReference>
<dbReference type="GO" id="GO:0006400">
    <property type="term" value="P:tRNA modification"/>
    <property type="evidence" value="ECO:0007669"/>
    <property type="project" value="UniProtKB-UniRule"/>
</dbReference>
<dbReference type="CDD" id="cd01992">
    <property type="entry name" value="TilS_N"/>
    <property type="match status" value="1"/>
</dbReference>
<dbReference type="Gene3D" id="3.40.50.620">
    <property type="entry name" value="HUPs"/>
    <property type="match status" value="1"/>
</dbReference>
<dbReference type="HAMAP" id="MF_01161">
    <property type="entry name" value="tRNA_Ile_lys_synt"/>
    <property type="match status" value="1"/>
</dbReference>
<dbReference type="InterPro" id="IPR014729">
    <property type="entry name" value="Rossmann-like_a/b/a_fold"/>
</dbReference>
<dbReference type="InterPro" id="IPR011063">
    <property type="entry name" value="TilS/TtcA_N"/>
</dbReference>
<dbReference type="InterPro" id="IPR012094">
    <property type="entry name" value="tRNA_Ile_lys_synt"/>
</dbReference>
<dbReference type="InterPro" id="IPR012795">
    <property type="entry name" value="tRNA_Ile_lys_synt_N"/>
</dbReference>
<dbReference type="NCBIfam" id="TIGR02432">
    <property type="entry name" value="lysidine_TilS_N"/>
    <property type="match status" value="1"/>
</dbReference>
<dbReference type="PANTHER" id="PTHR43033">
    <property type="entry name" value="TRNA(ILE)-LYSIDINE SYNTHASE-RELATED"/>
    <property type="match status" value="1"/>
</dbReference>
<dbReference type="PANTHER" id="PTHR43033:SF1">
    <property type="entry name" value="TRNA(ILE)-LYSIDINE SYNTHASE-RELATED"/>
    <property type="match status" value="1"/>
</dbReference>
<dbReference type="Pfam" id="PF01171">
    <property type="entry name" value="ATP_bind_3"/>
    <property type="match status" value="1"/>
</dbReference>
<dbReference type="SUPFAM" id="SSF52402">
    <property type="entry name" value="Adenine nucleotide alpha hydrolases-like"/>
    <property type="match status" value="1"/>
</dbReference>
<proteinExistence type="inferred from homology"/>
<name>TILS_BRUA1</name>
<evidence type="ECO:0000255" key="1">
    <source>
        <dbReference type="HAMAP-Rule" id="MF_01161"/>
    </source>
</evidence>